<sequence length="746" mass="83891">MTCTSAFIKVVRFIQVVIDTREIRSLCTIRMQVESLQNLQAKIRNDERNHSLTKKYLTDDIVKKYQATKTSLGGTLAQCVNTNAYNPGALLPRSCDLNAYETFRDFFDAVIADYHKVPDGKIQHPKSNFGDLKSLSFTDLNTYGNLVVSTRVRLGRTVEGFGFGPTLTKETRIELENKISTALHNLSGEYEGTYYPLTGMSEEDRIKLVNDHFLFRNDDNVLRDAGGYIDWPTGRGIFINKQKNFLVWINEEDHIRVISMQKGGDLIAVYKRLADAIQELSKSLKFAFNDRLGFITFCPSNLGTTLRASVHAKIPMLASLPNFKEICEKHGIQPRGTHGEHTESVGGIYDLSNKRRLGLTELDAVTEMHSGVRALLELEVMLQEYNKGAPEGVMPVEPLTYLAKLLEGASIEKCYTRKYLTPEIIKKYDGKRTTHGATLAHMIRNGAYNNRSICPRTGEAECYSTFIDYLDPLICDYHGVKDSAFKHPAPTFGDLSKLPFGDLDPTGKFIVSTRVRVGRSVEDFLFPTIMSKTDRIKLEQVISGALKGLTGEHAGTYYPLTDMKEEDRKQLVEDHFLFKNDDPVLRDAGGYRDWPVGRGIFHNNSKTFLVWVCEEDHMRIISMQQGGNLAAVYKRLIEGINAIGKSMKFAHSDKYGYITCCPSNLGTSMRASVLLKIPKLSSQPKKLDEICAKYMLQARGLYGEHTESPDGTYDISNKRRLGLTELQAAHEMAEGVAKMIEIEKGL</sequence>
<name>KTRC_SCHMA</name>
<organism>
    <name type="scientific">Schistosoma mansoni</name>
    <name type="common">Blood fluke</name>
    <dbReference type="NCBI Taxonomy" id="6183"/>
    <lineage>
        <taxon>Eukaryota</taxon>
        <taxon>Metazoa</taxon>
        <taxon>Spiralia</taxon>
        <taxon>Lophotrochozoa</taxon>
        <taxon>Platyhelminthes</taxon>
        <taxon>Trematoda</taxon>
        <taxon>Digenea</taxon>
        <taxon>Strigeidida</taxon>
        <taxon>Schistosomatoidea</taxon>
        <taxon>Schistosomatidae</taxon>
        <taxon>Schistosoma</taxon>
    </lineage>
</organism>
<gene>
    <name type="ORF">Smp_194770</name>
</gene>
<proteinExistence type="evidence at protein level"/>
<feature type="chain" id="PRO_0000212009" description="Taurocyamine kinase">
    <location>
        <begin position="1"/>
        <end position="746"/>
    </location>
</feature>
<feature type="repeat" description="Approximate">
    <location>
        <begin position="31"/>
        <end position="393"/>
    </location>
</feature>
<feature type="domain" description="Phosphagen kinase N-terminal 1" evidence="1">
    <location>
        <begin position="35"/>
        <end position="116"/>
    </location>
</feature>
<feature type="domain" description="Phosphagen kinase C-terminal 1" evidence="2">
    <location>
        <begin position="146"/>
        <end position="382"/>
    </location>
</feature>
<feature type="repeat" description="Approximate">
    <location>
        <begin position="394"/>
        <end position="705"/>
    </location>
</feature>
<feature type="domain" description="Phosphagen kinase N-terminal 2" evidence="1">
    <location>
        <begin position="398"/>
        <end position="479"/>
    </location>
</feature>
<feature type="domain" description="Phosphagen kinase C-terminal 2" evidence="2">
    <location>
        <begin position="509"/>
        <end position="746"/>
    </location>
</feature>
<feature type="active site" evidence="3">
    <location>
        <position position="298"/>
    </location>
</feature>
<feature type="active site" evidence="3">
    <location>
        <position position="661"/>
    </location>
</feature>
<feature type="binding site" evidence="2">
    <location>
        <begin position="149"/>
        <end position="153"/>
    </location>
    <ligand>
        <name>ATP</name>
        <dbReference type="ChEBI" id="CHEBI:30616"/>
    </ligand>
</feature>
<feature type="binding site" evidence="2">
    <location>
        <position position="212"/>
    </location>
    <ligand>
        <name>ATP</name>
        <dbReference type="ChEBI" id="CHEBI:30616"/>
    </ligand>
</feature>
<feature type="binding site" evidence="2">
    <location>
        <position position="256"/>
    </location>
    <ligand>
        <name>ATP</name>
        <dbReference type="ChEBI" id="CHEBI:30616"/>
    </ligand>
</feature>
<feature type="binding site" evidence="2">
    <location>
        <begin position="307"/>
        <end position="311"/>
    </location>
    <ligand>
        <name>ATP</name>
        <dbReference type="ChEBI" id="CHEBI:30616"/>
    </ligand>
</feature>
<feature type="binding site" evidence="2">
    <location>
        <begin position="335"/>
        <end position="340"/>
    </location>
    <ligand>
        <name>ATP</name>
        <dbReference type="ChEBI" id="CHEBI:30616"/>
    </ligand>
</feature>
<feature type="binding site" evidence="2">
    <location>
        <begin position="512"/>
        <end position="516"/>
    </location>
    <ligand>
        <name>ATP</name>
        <dbReference type="ChEBI" id="CHEBI:30616"/>
    </ligand>
</feature>
<feature type="binding site" evidence="2">
    <location>
        <position position="575"/>
    </location>
    <ligand>
        <name>ATP</name>
        <dbReference type="ChEBI" id="CHEBI:30616"/>
    </ligand>
</feature>
<feature type="binding site" evidence="2">
    <location>
        <position position="619"/>
    </location>
    <ligand>
        <name>ATP</name>
        <dbReference type="ChEBI" id="CHEBI:30616"/>
    </ligand>
</feature>
<feature type="binding site" evidence="2">
    <location>
        <begin position="670"/>
        <end position="674"/>
    </location>
    <ligand>
        <name>ATP</name>
        <dbReference type="ChEBI" id="CHEBI:30616"/>
    </ligand>
</feature>
<feature type="binding site" evidence="2">
    <location>
        <begin position="699"/>
        <end position="704"/>
    </location>
    <ligand>
        <name>ATP</name>
        <dbReference type="ChEBI" id="CHEBI:30616"/>
    </ligand>
</feature>
<feature type="sequence conflict" description="In Ref. 5; ABU49846." evidence="6" ref="5">
    <original>N</original>
    <variation>S</variation>
    <location>
        <position position="45"/>
    </location>
</feature>
<feature type="sequence conflict" description="In Ref. 1; AAA29927." evidence="6" ref="1">
    <original>MSEEDRIKLVND</original>
    <variation>CQRGQNQTSKRH</variation>
    <location>
        <begin position="200"/>
        <end position="211"/>
    </location>
</feature>
<feature type="sequence conflict" description="In Ref. 1; AAA29927." evidence="6" ref="1">
    <original>N</original>
    <variation>K</variation>
    <location>
        <position position="244"/>
    </location>
</feature>
<feature type="sequence conflict" description="In Ref. 1; AAA29927." evidence="6" ref="1">
    <original>G</original>
    <variation>R</variation>
    <location>
        <position position="264"/>
    </location>
</feature>
<feature type="sequence conflict" description="In Ref. 5; ABU49846." evidence="6" ref="5">
    <original>K</original>
    <variation>R</variation>
    <location>
        <position position="282"/>
    </location>
</feature>
<feature type="sequence conflict" description="In Ref. 1; AAA29927, 2; no nucleotide entry and 4; ABU49845." evidence="6" ref="1 2 4">
    <original>D</original>
    <variation>G</variation>
    <location>
        <position position="523"/>
    </location>
</feature>
<feature type="sequence conflict" description="In Ref. 2; no nucleotide entry." evidence="6" ref="2">
    <original>V</original>
    <variation>A</variation>
    <location>
        <position position="632"/>
    </location>
</feature>
<feature type="sequence conflict" description="In Ref. 1; AAA29927." evidence="6" ref="1">
    <original>SSQPKKLDEICAKYMLQARGLYGEHTESPDGTYDISNKRRLGLTELQAAHEMAEGVAKMIEIEKGL</original>
    <variation>VLNRKSWMKFVRSDMPSKLEVLLW</variation>
    <location>
        <begin position="681"/>
        <end position="746"/>
    </location>
</feature>
<feature type="helix" evidence="7">
    <location>
        <begin position="36"/>
        <end position="44"/>
    </location>
</feature>
<feature type="helix" evidence="7">
    <location>
        <begin position="52"/>
        <end position="56"/>
    </location>
</feature>
<feature type="helix" evidence="7">
    <location>
        <begin position="59"/>
        <end position="65"/>
    </location>
</feature>
<feature type="helix" evidence="7">
    <location>
        <begin position="76"/>
        <end position="85"/>
    </location>
</feature>
<feature type="helix" evidence="7">
    <location>
        <begin position="99"/>
        <end position="102"/>
    </location>
</feature>
<feature type="helix" evidence="7">
    <location>
        <begin position="104"/>
        <end position="114"/>
    </location>
</feature>
<feature type="helix" evidence="8">
    <location>
        <begin position="118"/>
        <end position="120"/>
    </location>
</feature>
<feature type="helix" evidence="7">
    <location>
        <begin position="132"/>
        <end position="134"/>
    </location>
</feature>
<feature type="helix" evidence="7">
    <location>
        <begin position="140"/>
        <end position="142"/>
    </location>
</feature>
<feature type="strand" evidence="7">
    <location>
        <begin position="147"/>
        <end position="156"/>
    </location>
</feature>
<feature type="turn" evidence="7">
    <location>
        <begin position="164"/>
        <end position="166"/>
    </location>
</feature>
<feature type="helix" evidence="7">
    <location>
        <begin position="169"/>
        <end position="184"/>
    </location>
</feature>
<feature type="helix" evidence="7">
    <location>
        <begin position="188"/>
        <end position="190"/>
    </location>
</feature>
<feature type="strand" evidence="7">
    <location>
        <begin position="192"/>
        <end position="197"/>
    </location>
</feature>
<feature type="helix" evidence="7">
    <location>
        <begin position="202"/>
        <end position="210"/>
    </location>
</feature>
<feature type="helix" evidence="7">
    <location>
        <begin position="220"/>
        <end position="224"/>
    </location>
</feature>
<feature type="turn" evidence="7">
    <location>
        <begin position="225"/>
        <end position="234"/>
    </location>
</feature>
<feature type="strand" evidence="7">
    <location>
        <begin position="236"/>
        <end position="240"/>
    </location>
</feature>
<feature type="strand" evidence="7">
    <location>
        <begin position="245"/>
        <end position="264"/>
    </location>
</feature>
<feature type="helix" evidence="7">
    <location>
        <begin position="266"/>
        <end position="281"/>
    </location>
</feature>
<feature type="turn" evidence="7">
    <location>
        <begin position="290"/>
        <end position="292"/>
    </location>
</feature>
<feature type="helix" evidence="7">
    <location>
        <begin position="299"/>
        <end position="301"/>
    </location>
</feature>
<feature type="strand" evidence="7">
    <location>
        <begin position="307"/>
        <end position="313"/>
    </location>
</feature>
<feature type="helix" evidence="7">
    <location>
        <begin position="315"/>
        <end position="318"/>
    </location>
</feature>
<feature type="helix" evidence="7">
    <location>
        <begin position="323"/>
        <end position="329"/>
    </location>
</feature>
<feature type="strand" evidence="7">
    <location>
        <begin position="332"/>
        <end position="336"/>
    </location>
</feature>
<feature type="strand" evidence="7">
    <location>
        <begin position="348"/>
        <end position="354"/>
    </location>
</feature>
<feature type="strand" evidence="7">
    <location>
        <begin position="357"/>
        <end position="359"/>
    </location>
</feature>
<feature type="helix" evidence="7">
    <location>
        <begin position="361"/>
        <end position="385"/>
    </location>
</feature>
<feature type="turn" evidence="7">
    <location>
        <begin position="386"/>
        <end position="388"/>
    </location>
</feature>
<feature type="helix" evidence="7">
    <location>
        <begin position="399"/>
        <end position="406"/>
    </location>
</feature>
<feature type="turn" evidence="7">
    <location>
        <begin position="411"/>
        <end position="413"/>
    </location>
</feature>
<feature type="helix" evidence="7">
    <location>
        <begin position="415"/>
        <end position="418"/>
    </location>
</feature>
<feature type="helix" evidence="7">
    <location>
        <begin position="422"/>
        <end position="428"/>
    </location>
</feature>
<feature type="helix" evidence="7">
    <location>
        <begin position="439"/>
        <end position="448"/>
    </location>
</feature>
<feature type="helix" evidence="7">
    <location>
        <begin position="462"/>
        <end position="465"/>
    </location>
</feature>
<feature type="helix" evidence="7">
    <location>
        <begin position="467"/>
        <end position="478"/>
    </location>
</feature>
<feature type="strand" evidence="7">
    <location>
        <begin position="506"/>
        <end position="519"/>
    </location>
</feature>
<feature type="turn" evidence="7">
    <location>
        <begin position="527"/>
        <end position="529"/>
    </location>
</feature>
<feature type="helix" evidence="7">
    <location>
        <begin position="532"/>
        <end position="547"/>
    </location>
</feature>
<feature type="helix" evidence="7">
    <location>
        <begin position="551"/>
        <end position="553"/>
    </location>
</feature>
<feature type="strand" evidence="7">
    <location>
        <begin position="555"/>
        <end position="562"/>
    </location>
</feature>
<feature type="helix" evidence="7">
    <location>
        <begin position="565"/>
        <end position="573"/>
    </location>
</feature>
<feature type="helix" evidence="7">
    <location>
        <begin position="583"/>
        <end position="588"/>
    </location>
</feature>
<feature type="turn" evidence="7">
    <location>
        <begin position="589"/>
        <end position="597"/>
    </location>
</feature>
<feature type="strand" evidence="7">
    <location>
        <begin position="599"/>
        <end position="603"/>
    </location>
</feature>
<feature type="strand" evidence="7">
    <location>
        <begin position="606"/>
        <end position="628"/>
    </location>
</feature>
<feature type="helix" evidence="7">
    <location>
        <begin position="629"/>
        <end position="644"/>
    </location>
</feature>
<feature type="turn" evidence="7">
    <location>
        <begin position="653"/>
        <end position="655"/>
    </location>
</feature>
<feature type="helix" evidence="7">
    <location>
        <begin position="662"/>
        <end position="664"/>
    </location>
</feature>
<feature type="strand" evidence="7">
    <location>
        <begin position="669"/>
        <end position="676"/>
    </location>
</feature>
<feature type="helix" evidence="7">
    <location>
        <begin position="680"/>
        <end position="682"/>
    </location>
</feature>
<feature type="turn" evidence="7">
    <location>
        <begin position="684"/>
        <end position="687"/>
    </location>
</feature>
<feature type="helix" evidence="7">
    <location>
        <begin position="688"/>
        <end position="693"/>
    </location>
</feature>
<feature type="strand" evidence="7">
    <location>
        <begin position="696"/>
        <end position="699"/>
    </location>
</feature>
<feature type="helix" evidence="8">
    <location>
        <begin position="709"/>
        <end position="711"/>
    </location>
</feature>
<feature type="strand" evidence="7">
    <location>
        <begin position="712"/>
        <end position="717"/>
    </location>
</feature>
<feature type="strand" evidence="7">
    <location>
        <begin position="721"/>
        <end position="723"/>
    </location>
</feature>
<feature type="helix" evidence="7">
    <location>
        <begin position="725"/>
        <end position="745"/>
    </location>
</feature>
<accession>P16641</accession>
<accession>A7UAX4</accession>
<accession>A7UAX5</accession>
<accession>C4QUJ5</accession>
<accession>G4VAV2</accession>
<keyword id="KW-0002">3D-structure</keyword>
<keyword id="KW-0067">ATP-binding</keyword>
<keyword id="KW-0285">Flavoprotein</keyword>
<keyword id="KW-0418">Kinase</keyword>
<keyword id="KW-0460">Magnesium</keyword>
<keyword id="KW-0479">Metal-binding</keyword>
<keyword id="KW-0547">Nucleotide-binding</keyword>
<keyword id="KW-0560">Oxidoreductase</keyword>
<keyword id="KW-1185">Reference proteome</keyword>
<keyword id="KW-0677">Repeat</keyword>
<keyword id="KW-0808">Transferase</keyword>
<dbReference type="EC" id="2.7.3.4"/>
<dbReference type="EMBL" id="J05410">
    <property type="protein sequence ID" value="AAA29927.1"/>
    <property type="status" value="ALT_FRAME"/>
    <property type="molecule type" value="mRNA"/>
</dbReference>
<dbReference type="EMBL" id="HE601624">
    <property type="protein sequence ID" value="CCD76533.1"/>
    <property type="status" value="ALT_SEQ"/>
    <property type="molecule type" value="Genomic_DNA"/>
</dbReference>
<dbReference type="EMBL" id="EU042595">
    <property type="protein sequence ID" value="ABU49845.1"/>
    <property type="molecule type" value="mRNA"/>
</dbReference>
<dbReference type="EMBL" id="EU042596">
    <property type="protein sequence ID" value="ABU49846.1"/>
    <property type="molecule type" value="mRNA"/>
</dbReference>
<dbReference type="EMBL" id="L31768">
    <property type="protein sequence ID" value="AAA29912.1"/>
    <property type="molecule type" value="Genomic_DNA"/>
</dbReference>
<dbReference type="EMBL" id="L31769">
    <property type="protein sequence ID" value="AAA29913.1"/>
    <property type="molecule type" value="Genomic_DNA"/>
</dbReference>
<dbReference type="PIR" id="A35743">
    <property type="entry name" value="A35743"/>
</dbReference>
<dbReference type="RefSeq" id="XP_018649405.1">
    <property type="nucleotide sequence ID" value="XM_018795055.1"/>
</dbReference>
<dbReference type="PDB" id="4WO8">
    <property type="method" value="X-ray"/>
    <property type="resolution" value="2.20 A"/>
    <property type="chains" value="A=31-746"/>
</dbReference>
<dbReference type="PDB" id="4WOD">
    <property type="method" value="X-ray"/>
    <property type="resolution" value="1.90 A"/>
    <property type="chains" value="A=31-746"/>
</dbReference>
<dbReference type="PDB" id="4WOE">
    <property type="method" value="X-ray"/>
    <property type="resolution" value="2.30 A"/>
    <property type="chains" value="A/B=31-746"/>
</dbReference>
<dbReference type="PDBsum" id="4WO8"/>
<dbReference type="PDBsum" id="4WOD"/>
<dbReference type="PDBsum" id="4WOE"/>
<dbReference type="SMR" id="P16641"/>
<dbReference type="STRING" id="6183.P16641"/>
<dbReference type="EnsemblMetazoa" id="Smp_194770.1">
    <property type="protein sequence ID" value="Smp_194770.1"/>
    <property type="gene ID" value="Smp_194770"/>
</dbReference>
<dbReference type="GeneID" id="8351992"/>
<dbReference type="KEGG" id="smm:Smp_194770"/>
<dbReference type="CTD" id="8351992"/>
<dbReference type="eggNOG" id="KOG3581">
    <property type="taxonomic scope" value="Eukaryota"/>
</dbReference>
<dbReference type="HOGENOM" id="CLU_019868_2_0_1"/>
<dbReference type="InParanoid" id="P16641"/>
<dbReference type="OrthoDB" id="430219at2759"/>
<dbReference type="BRENDA" id="2.7.3.4">
    <property type="organism ID" value="5608"/>
</dbReference>
<dbReference type="EvolutionaryTrace" id="P16641"/>
<dbReference type="Proteomes" id="UP000008854">
    <property type="component" value="Unassembled WGS sequence"/>
</dbReference>
<dbReference type="GO" id="GO:0005615">
    <property type="term" value="C:extracellular space"/>
    <property type="evidence" value="ECO:0007669"/>
    <property type="project" value="TreeGrafter"/>
</dbReference>
<dbReference type="GO" id="GO:0005524">
    <property type="term" value="F:ATP binding"/>
    <property type="evidence" value="ECO:0007669"/>
    <property type="project" value="UniProtKB-KW"/>
</dbReference>
<dbReference type="GO" id="GO:0004111">
    <property type="term" value="F:creatine kinase activity"/>
    <property type="evidence" value="ECO:0007669"/>
    <property type="project" value="InterPro"/>
</dbReference>
<dbReference type="GO" id="GO:0046872">
    <property type="term" value="F:metal ion binding"/>
    <property type="evidence" value="ECO:0007669"/>
    <property type="project" value="UniProtKB-KW"/>
</dbReference>
<dbReference type="GO" id="GO:0016491">
    <property type="term" value="F:oxidoreductase activity"/>
    <property type="evidence" value="ECO:0007669"/>
    <property type="project" value="UniProtKB-KW"/>
</dbReference>
<dbReference type="GO" id="GO:0050324">
    <property type="term" value="F:taurocyamine kinase activity"/>
    <property type="evidence" value="ECO:0007669"/>
    <property type="project" value="UniProtKB-EC"/>
</dbReference>
<dbReference type="GO" id="GO:0046314">
    <property type="term" value="P:phosphocreatine biosynthetic process"/>
    <property type="evidence" value="ECO:0007669"/>
    <property type="project" value="InterPro"/>
</dbReference>
<dbReference type="CDD" id="cd07932">
    <property type="entry name" value="arginine_kinase_like"/>
    <property type="match status" value="2"/>
</dbReference>
<dbReference type="FunFam" id="3.30.590.10:FF:000006">
    <property type="entry name" value="Arginine kinase 1"/>
    <property type="match status" value="2"/>
</dbReference>
<dbReference type="FunFam" id="1.10.135.10:FF:000003">
    <property type="entry name" value="Three-domain arginine kinase"/>
    <property type="match status" value="2"/>
</dbReference>
<dbReference type="Gene3D" id="1.10.135.10">
    <property type="entry name" value="ATP:guanido phosphotransferase, N-terminal domain"/>
    <property type="match status" value="2"/>
</dbReference>
<dbReference type="Gene3D" id="3.30.590.10">
    <property type="entry name" value="Glutamine synthetase/guanido kinase, catalytic domain"/>
    <property type="match status" value="2"/>
</dbReference>
<dbReference type="InterPro" id="IPR000749">
    <property type="entry name" value="ATP-guanido_PTrfase"/>
</dbReference>
<dbReference type="InterPro" id="IPR022415">
    <property type="entry name" value="ATP-guanido_PTrfase_AS"/>
</dbReference>
<dbReference type="InterPro" id="IPR022414">
    <property type="entry name" value="ATP-guanido_PTrfase_cat"/>
</dbReference>
<dbReference type="InterPro" id="IPR022413">
    <property type="entry name" value="ATP-guanido_PTrfase_N"/>
</dbReference>
<dbReference type="InterPro" id="IPR036802">
    <property type="entry name" value="ATP-guanido_PTrfase_N_sf"/>
</dbReference>
<dbReference type="InterPro" id="IPR014746">
    <property type="entry name" value="Gln_synth/guanido_kin_cat_dom"/>
</dbReference>
<dbReference type="PANTHER" id="PTHR11547:SF38">
    <property type="entry name" value="ARGININE KINASE 1-RELATED"/>
    <property type="match status" value="1"/>
</dbReference>
<dbReference type="PANTHER" id="PTHR11547">
    <property type="entry name" value="ARGININE OR CREATINE KINASE"/>
    <property type="match status" value="1"/>
</dbReference>
<dbReference type="Pfam" id="PF00217">
    <property type="entry name" value="ATP-gua_Ptrans"/>
    <property type="match status" value="2"/>
</dbReference>
<dbReference type="Pfam" id="PF02807">
    <property type="entry name" value="ATP-gua_PtransN"/>
    <property type="match status" value="2"/>
</dbReference>
<dbReference type="SUPFAM" id="SSF55931">
    <property type="entry name" value="Glutamine synthetase/guanido kinase"/>
    <property type="match status" value="2"/>
</dbReference>
<dbReference type="SUPFAM" id="SSF48034">
    <property type="entry name" value="Guanido kinase N-terminal domain"/>
    <property type="match status" value="2"/>
</dbReference>
<dbReference type="PROSITE" id="PS00112">
    <property type="entry name" value="PHOSPHAGEN_KINASE"/>
    <property type="match status" value="2"/>
</dbReference>
<dbReference type="PROSITE" id="PS51510">
    <property type="entry name" value="PHOSPHAGEN_KINASE_C"/>
    <property type="match status" value="2"/>
</dbReference>
<dbReference type="PROSITE" id="PS51509">
    <property type="entry name" value="PHOSPHAGEN_KINASE_N"/>
    <property type="match status" value="2"/>
</dbReference>
<protein>
    <recommendedName>
        <fullName>Taurocyamine kinase</fullName>
        <ecNumber>2.7.3.4</ecNumber>
    </recommendedName>
    <alternativeName>
        <fullName>ATP:guanidino kinase Smc74</fullName>
    </alternativeName>
    <alternativeName>
        <fullName>ATP:guanidino phosphotransferase</fullName>
        <shortName>SmGK</shortName>
    </alternativeName>
</protein>
<reference key="1">
    <citation type="journal article" date="1990" name="J. Biol. Chem.">
        <title>A cloned ATP:guanidino kinase in the trematode Schistosoma mansoni has a novel duplicated structure.</title>
        <authorList>
            <person name="Stein L.D."/>
            <person name="Harn D.A."/>
            <person name="David J.R."/>
        </authorList>
    </citation>
    <scope>NUCLEOTIDE SEQUENCE [MRNA]</scope>
    <scope>DEVELOPMENTAL STAGE</scope>
    <source>
        <strain>Puerto Rican</strain>
    </source>
</reference>
<reference key="2">
    <citation type="journal article" date="2008" name="Acta Crystallogr. F">
        <title>Crystallization and X-ray analysis of the Schistosoma mansoni guanidino kinase.</title>
        <authorList>
            <person name="Awama A.M."/>
            <person name="Paracuellos P."/>
            <person name="Laurent S."/>
            <person name="Dissous C."/>
            <person name="Marcillat O."/>
            <person name="Gouet P."/>
        </authorList>
    </citation>
    <scope>NUCLEOTIDE SEQUENCE [MRNA]</scope>
    <scope>X-RAY CRYSTALLOGRAPHY (2.8 ANGSTROMS)</scope>
    <scope>FUNCTION</scope>
    <scope>CATALYTIC ACTIVITY</scope>
    <scope>COFACTOR</scope>
</reference>
<reference key="3">
    <citation type="journal article" date="2009" name="Nature">
        <title>The genome of the blood fluke Schistosoma mansoni.</title>
        <authorList>
            <person name="Berriman M."/>
            <person name="Haas B.J."/>
            <person name="LoVerde P.T."/>
            <person name="Wilson R.A."/>
            <person name="Dillon G.P."/>
            <person name="Cerqueira G.C."/>
            <person name="Mashiyama S.T."/>
            <person name="Al-Lazikani B."/>
            <person name="Andrade L.F."/>
            <person name="Ashton P.D."/>
            <person name="Aslett M.A."/>
            <person name="Bartholomeu D.C."/>
            <person name="Blandin G."/>
            <person name="Caffrey C.R."/>
            <person name="Coghlan A."/>
            <person name="Coulson R."/>
            <person name="Day T.A."/>
            <person name="Delcher A."/>
            <person name="DeMarco R."/>
            <person name="Djikeng A."/>
            <person name="Eyre T."/>
            <person name="Gamble J.A."/>
            <person name="Ghedin E."/>
            <person name="Gu Y."/>
            <person name="Hertz-Fowler C."/>
            <person name="Hirai H."/>
            <person name="Hirai Y."/>
            <person name="Houston R."/>
            <person name="Ivens A."/>
            <person name="Johnston D.A."/>
            <person name="Lacerda D."/>
            <person name="Macedo C.D."/>
            <person name="McVeigh P."/>
            <person name="Ning Z."/>
            <person name="Oliveira G."/>
            <person name="Overington J.P."/>
            <person name="Parkhill J."/>
            <person name="Pertea M."/>
            <person name="Pierce R.J."/>
            <person name="Protasio A.V."/>
            <person name="Quail M.A."/>
            <person name="Rajandream M.A."/>
            <person name="Rogers J."/>
            <person name="Sajid M."/>
            <person name="Salzberg S.L."/>
            <person name="Stanke M."/>
            <person name="Tivey A.R."/>
            <person name="White O."/>
            <person name="Williams D.L."/>
            <person name="Wortman J."/>
            <person name="Wu W."/>
            <person name="Zamanian M."/>
            <person name="Zerlotini A."/>
            <person name="Fraser-Liggett C.M."/>
            <person name="Barrell B.G."/>
            <person name="El-Sayed N.M."/>
        </authorList>
    </citation>
    <scope>NUCLEOTIDE SEQUENCE [LARGE SCALE GENOMIC DNA]</scope>
    <source>
        <strain>Puerto Rican</strain>
    </source>
</reference>
<reference key="4">
    <citation type="journal article" date="2012" name="PLoS Negl. Trop. Dis.">
        <title>A systematically improved high quality genome and transcriptome of the human blood fluke Schistosoma mansoni.</title>
        <authorList>
            <person name="Protasio A.V."/>
            <person name="Tsai I.J."/>
            <person name="Babbage A."/>
            <person name="Nichol S."/>
            <person name="Hunt M."/>
            <person name="Aslett M.A."/>
            <person name="De Silva N."/>
            <person name="Velarde G.S."/>
            <person name="Anderson T.J."/>
            <person name="Clark R.C."/>
            <person name="Davidson C."/>
            <person name="Dillon G.P."/>
            <person name="Holroyd N.E."/>
            <person name="LoVerde P.T."/>
            <person name="Lloyd C."/>
            <person name="McQuillan J."/>
            <person name="Oliveira G."/>
            <person name="Otto T.D."/>
            <person name="Parker-Manuel S.J."/>
            <person name="Quail M.A."/>
            <person name="Wilson R.A."/>
            <person name="Zerlotini A."/>
            <person name="Dunne D.W."/>
            <person name="Berriman M."/>
        </authorList>
    </citation>
    <scope>NUCLEOTIDE SEQUENCE [LARGE SCALE GENOMIC DNA]</scope>
    <source>
        <strain>Puerto Rican</strain>
    </source>
</reference>
<reference key="5">
    <citation type="journal article" date="2008" name="Mol. Biochem. Parasitol.">
        <title>Molecular determinants of compatibility polymorphism in the Biomphalaria glabrata/Schistosoma mansoni model: New candidates identified by a global comparative proteomics approach.</title>
        <authorList>
            <person name="Roger E."/>
            <person name="Mitta G."/>
            <person name="Mone Y."/>
            <person name="Bouchut A."/>
            <person name="Rognon A."/>
            <person name="Grunau C."/>
            <person name="Boissier J."/>
            <person name="Theron A."/>
            <person name="Gourbal B.E."/>
        </authorList>
    </citation>
    <scope>NUCLEOTIDE SEQUENCE [MRNA] OF 1-683</scope>
    <source>
        <strain>C</strain>
        <strain>IC</strain>
    </source>
</reference>
<reference key="6">
    <citation type="journal article" date="1994" name="Mol. Biochem. Parasitol.">
        <title>The Schistosoma mansoni phosphagen kinase gene contains two closely apposed transcription initiation sites and arose from a fused gene duplication.</title>
        <authorList>
            <person name="Shoemaker C.B."/>
        </authorList>
    </citation>
    <scope>NUCLEOTIDE SEQUENCE [GENOMIC DNA] OF 1-52 AND 362-415</scope>
</reference>
<comment type="function">
    <text evidence="4">This family of enzymes reversibly catalyzes the transfer of phosphate between ATP and various phosphogens (e.g. creatine phosphate).</text>
</comment>
<comment type="catalytic activity">
    <reaction evidence="4">
        <text>taurocyamine + ATP = N-phosphotaurocyamine + ADP + H(+)</text>
        <dbReference type="Rhea" id="RHEA:22516"/>
        <dbReference type="ChEBI" id="CHEBI:15378"/>
        <dbReference type="ChEBI" id="CHEBI:30616"/>
        <dbReference type="ChEBI" id="CHEBI:57838"/>
        <dbReference type="ChEBI" id="CHEBI:58064"/>
        <dbReference type="ChEBI" id="CHEBI:456216"/>
        <dbReference type="EC" id="2.7.3.4"/>
    </reaction>
</comment>
<comment type="cofactor">
    <cofactor evidence="4">
        <name>Mg(2+)</name>
        <dbReference type="ChEBI" id="CHEBI:18420"/>
    </cofactor>
</comment>
<comment type="developmental stage">
    <text evidence="5">Expressed at low levels in 37-day sporocysts, increases 25-fold in the infective cercarial and early schistosomular stages. Levels decrease dramatically in adults, adult males have approximately twice the expression level as in adult females.</text>
</comment>
<comment type="similarity">
    <text evidence="1 2">Belongs to the ATP:guanido phosphotransferase family.</text>
</comment>
<comment type="sequence caution" evidence="6">
    <conflict type="frameshift">
        <sequence resource="EMBL-CDS" id="AAA29927"/>
    </conflict>
</comment>
<comment type="sequence caution" evidence="6">
    <conflict type="erroneous gene model prediction">
        <sequence resource="EMBL-CDS" id="CCD76533"/>
    </conflict>
</comment>
<evidence type="ECO:0000255" key="1">
    <source>
        <dbReference type="PROSITE-ProRule" id="PRU00842"/>
    </source>
</evidence>
<evidence type="ECO:0000255" key="2">
    <source>
        <dbReference type="PROSITE-ProRule" id="PRU00843"/>
    </source>
</evidence>
<evidence type="ECO:0000255" key="3">
    <source>
        <dbReference type="PROSITE-ProRule" id="PRU10029"/>
    </source>
</evidence>
<evidence type="ECO:0000269" key="4">
    <source>
    </source>
</evidence>
<evidence type="ECO:0000269" key="5">
    <source>
    </source>
</evidence>
<evidence type="ECO:0000305" key="6"/>
<evidence type="ECO:0007829" key="7">
    <source>
        <dbReference type="PDB" id="4WOD"/>
    </source>
</evidence>
<evidence type="ECO:0007829" key="8">
    <source>
        <dbReference type="PDB" id="4WOE"/>
    </source>
</evidence>